<dbReference type="EMBL" id="AM933172">
    <property type="protein sequence ID" value="CAR32926.1"/>
    <property type="molecule type" value="Genomic_DNA"/>
</dbReference>
<dbReference type="RefSeq" id="WP_001294466.1">
    <property type="nucleotide sequence ID" value="NC_011294.1"/>
</dbReference>
<dbReference type="SMR" id="B5R4A8"/>
<dbReference type="KEGG" id="set:SEN1349"/>
<dbReference type="HOGENOM" id="CLU_057693_2_0_6"/>
<dbReference type="Proteomes" id="UP000000613">
    <property type="component" value="Chromosome"/>
</dbReference>
<dbReference type="GO" id="GO:0005886">
    <property type="term" value="C:plasma membrane"/>
    <property type="evidence" value="ECO:0007669"/>
    <property type="project" value="UniProtKB-SubCell"/>
</dbReference>
<dbReference type="HAMAP" id="MF_01085">
    <property type="entry name" value="UPF0283"/>
    <property type="match status" value="1"/>
</dbReference>
<dbReference type="InterPro" id="IPR021147">
    <property type="entry name" value="DUF697"/>
</dbReference>
<dbReference type="InterPro" id="IPR006507">
    <property type="entry name" value="UPF0283"/>
</dbReference>
<dbReference type="NCBIfam" id="TIGR01620">
    <property type="entry name" value="hyp_HI0043"/>
    <property type="match status" value="1"/>
</dbReference>
<dbReference type="PANTHER" id="PTHR39342">
    <property type="entry name" value="UPF0283 MEMBRANE PROTEIN YCJF"/>
    <property type="match status" value="1"/>
</dbReference>
<dbReference type="PANTHER" id="PTHR39342:SF1">
    <property type="entry name" value="UPF0283 MEMBRANE PROTEIN YCJF"/>
    <property type="match status" value="1"/>
</dbReference>
<dbReference type="Pfam" id="PF05128">
    <property type="entry name" value="DUF697"/>
    <property type="match status" value="1"/>
</dbReference>
<evidence type="ECO:0000255" key="1">
    <source>
        <dbReference type="HAMAP-Rule" id="MF_01085"/>
    </source>
</evidence>
<evidence type="ECO:0000256" key="2">
    <source>
        <dbReference type="SAM" id="MobiDB-lite"/>
    </source>
</evidence>
<proteinExistence type="inferred from homology"/>
<feature type="chain" id="PRO_1000136895" description="UPF0283 membrane protein YcjF">
    <location>
        <begin position="1"/>
        <end position="353"/>
    </location>
</feature>
<feature type="transmembrane region" description="Helical" evidence="1">
    <location>
        <begin position="70"/>
        <end position="90"/>
    </location>
</feature>
<feature type="transmembrane region" description="Helical" evidence="1">
    <location>
        <begin position="100"/>
        <end position="120"/>
    </location>
</feature>
<feature type="transmembrane region" description="Helical" evidence="1">
    <location>
        <begin position="213"/>
        <end position="233"/>
    </location>
</feature>
<feature type="region of interest" description="Disordered" evidence="2">
    <location>
        <begin position="1"/>
        <end position="35"/>
    </location>
</feature>
<feature type="compositionally biased region" description="Basic and acidic residues" evidence="2">
    <location>
        <begin position="1"/>
        <end position="19"/>
    </location>
</feature>
<keyword id="KW-0997">Cell inner membrane</keyword>
<keyword id="KW-1003">Cell membrane</keyword>
<keyword id="KW-0472">Membrane</keyword>
<keyword id="KW-0812">Transmembrane</keyword>
<keyword id="KW-1133">Transmembrane helix</keyword>
<comment type="subcellular location">
    <subcellularLocation>
        <location evidence="1">Cell inner membrane</location>
        <topology evidence="1">Multi-pass membrane protein</topology>
    </subcellularLocation>
</comment>
<comment type="similarity">
    <text evidence="1">Belongs to the UPF0283 family.</text>
</comment>
<name>YCJF_SALEP</name>
<protein>
    <recommendedName>
        <fullName evidence="1">UPF0283 membrane protein YcjF</fullName>
    </recommendedName>
</protein>
<accession>B5R4A8</accession>
<reference key="1">
    <citation type="journal article" date="2008" name="Genome Res.">
        <title>Comparative genome analysis of Salmonella enteritidis PT4 and Salmonella gallinarum 287/91 provides insights into evolutionary and host adaptation pathways.</title>
        <authorList>
            <person name="Thomson N.R."/>
            <person name="Clayton D.J."/>
            <person name="Windhorst D."/>
            <person name="Vernikos G."/>
            <person name="Davidson S."/>
            <person name="Churcher C."/>
            <person name="Quail M.A."/>
            <person name="Stevens M."/>
            <person name="Jones M.A."/>
            <person name="Watson M."/>
            <person name="Barron A."/>
            <person name="Layton A."/>
            <person name="Pickard D."/>
            <person name="Kingsley R.A."/>
            <person name="Bignell A."/>
            <person name="Clark L."/>
            <person name="Harris B."/>
            <person name="Ormond D."/>
            <person name="Abdellah Z."/>
            <person name="Brooks K."/>
            <person name="Cherevach I."/>
            <person name="Chillingworth T."/>
            <person name="Woodward J."/>
            <person name="Norberczak H."/>
            <person name="Lord A."/>
            <person name="Arrowsmith C."/>
            <person name="Jagels K."/>
            <person name="Moule S."/>
            <person name="Mungall K."/>
            <person name="Saunders M."/>
            <person name="Whitehead S."/>
            <person name="Chabalgoity J.A."/>
            <person name="Maskell D."/>
            <person name="Humphreys T."/>
            <person name="Roberts M."/>
            <person name="Barrow P.A."/>
            <person name="Dougan G."/>
            <person name="Parkhill J."/>
        </authorList>
    </citation>
    <scope>NUCLEOTIDE SEQUENCE [LARGE SCALE GENOMIC DNA]</scope>
    <source>
        <strain>P125109</strain>
    </source>
</reference>
<organism>
    <name type="scientific">Salmonella enteritidis PT4 (strain P125109)</name>
    <dbReference type="NCBI Taxonomy" id="550537"/>
    <lineage>
        <taxon>Bacteria</taxon>
        <taxon>Pseudomonadati</taxon>
        <taxon>Pseudomonadota</taxon>
        <taxon>Gammaproteobacteria</taxon>
        <taxon>Enterobacterales</taxon>
        <taxon>Enterobacteriaceae</taxon>
        <taxon>Salmonella</taxon>
    </lineage>
</organism>
<sequence length="353" mass="39281">MSEPLKPRIDFAEPLKEEPTSAFKAQQTFSEAESRTFAPAAIDERPEDEGVAEAAVDAALRPKRSLWRKMVMGGLALFGASVVGQGVQWTMNAWQTQDWVALGGCAAGALIIGAGVGSVVTEWRRLWRLRQRAHERDEARELLHSHSVGKGRAFCEKLAQQAGIDQSHPALQRWYAAIHETQNDREIVGLYAHLVQPVLDAQARREISRFAAESTLMIAVSSLALVDMAFIAWRNLRLINRIATLYGIELGYYSRLRLFRLVLLNIAFAGASELVREVGMDWMSQDLAARLSTRAAQGIGAGLLTARLGIKAMELCRPLPWIDNDKPRLGDFRRQLIGQLKETLQKSKSSPEK</sequence>
<gene>
    <name evidence="1" type="primary">ycjF</name>
    <name type="ordered locus">SEN1349</name>
</gene>